<feature type="chain" id="PRO_0000187766" description="Peptidyl-tRNA hydrolase">
    <location>
        <begin position="1"/>
        <end position="194"/>
    </location>
</feature>
<feature type="active site" description="Proton acceptor" evidence="1">
    <location>
        <position position="22"/>
    </location>
</feature>
<feature type="binding site" evidence="1">
    <location>
        <position position="17"/>
    </location>
    <ligand>
        <name>tRNA</name>
        <dbReference type="ChEBI" id="CHEBI:17843"/>
    </ligand>
</feature>
<feature type="binding site" evidence="1">
    <location>
        <position position="68"/>
    </location>
    <ligand>
        <name>tRNA</name>
        <dbReference type="ChEBI" id="CHEBI:17843"/>
    </ligand>
</feature>
<feature type="binding site" evidence="1">
    <location>
        <position position="70"/>
    </location>
    <ligand>
        <name>tRNA</name>
        <dbReference type="ChEBI" id="CHEBI:17843"/>
    </ligand>
</feature>
<feature type="binding site" evidence="1">
    <location>
        <position position="116"/>
    </location>
    <ligand>
        <name>tRNA</name>
        <dbReference type="ChEBI" id="CHEBI:17843"/>
    </ligand>
</feature>
<feature type="site" description="Discriminates between blocked and unblocked aminoacyl-tRNA" evidence="1">
    <location>
        <position position="12"/>
    </location>
</feature>
<feature type="site" description="Stabilizes the basic form of H active site to accept a proton" evidence="1">
    <location>
        <position position="95"/>
    </location>
</feature>
<accession>Q65V47</accession>
<keyword id="KW-0963">Cytoplasm</keyword>
<keyword id="KW-0378">Hydrolase</keyword>
<keyword id="KW-0694">RNA-binding</keyword>
<keyword id="KW-0820">tRNA-binding</keyword>
<organism>
    <name type="scientific">Mannheimia succiniciproducens (strain KCTC 0769BP / MBEL55E)</name>
    <dbReference type="NCBI Taxonomy" id="221988"/>
    <lineage>
        <taxon>Bacteria</taxon>
        <taxon>Pseudomonadati</taxon>
        <taxon>Pseudomonadota</taxon>
        <taxon>Gammaproteobacteria</taxon>
        <taxon>Pasteurellales</taxon>
        <taxon>Pasteurellaceae</taxon>
        <taxon>Basfia</taxon>
    </lineage>
</organism>
<comment type="function">
    <text evidence="1">Hydrolyzes ribosome-free peptidyl-tRNAs (with 1 or more amino acids incorporated), which drop off the ribosome during protein synthesis, or as a result of ribosome stalling.</text>
</comment>
<comment type="function">
    <text evidence="1">Catalyzes the release of premature peptidyl moieties from peptidyl-tRNA molecules trapped in stalled 50S ribosomal subunits, and thus maintains levels of free tRNAs and 50S ribosomes.</text>
</comment>
<comment type="catalytic activity">
    <reaction evidence="1">
        <text>an N-acyl-L-alpha-aminoacyl-tRNA + H2O = an N-acyl-L-amino acid + a tRNA + H(+)</text>
        <dbReference type="Rhea" id="RHEA:54448"/>
        <dbReference type="Rhea" id="RHEA-COMP:10123"/>
        <dbReference type="Rhea" id="RHEA-COMP:13883"/>
        <dbReference type="ChEBI" id="CHEBI:15377"/>
        <dbReference type="ChEBI" id="CHEBI:15378"/>
        <dbReference type="ChEBI" id="CHEBI:59874"/>
        <dbReference type="ChEBI" id="CHEBI:78442"/>
        <dbReference type="ChEBI" id="CHEBI:138191"/>
        <dbReference type="EC" id="3.1.1.29"/>
    </reaction>
</comment>
<comment type="subunit">
    <text evidence="1">Monomer.</text>
</comment>
<comment type="subcellular location">
    <subcellularLocation>
        <location evidence="1">Cytoplasm</location>
    </subcellularLocation>
</comment>
<comment type="similarity">
    <text evidence="1">Belongs to the PTH family.</text>
</comment>
<sequence length="194" mass="21169">MSEIKLIVGLGNPGDKYADTRHNAGEWLVERLARRFNFNLKDEAKFFGKTARAVIGGEEVRFLIPTTFMNLSGKAVGALATFYRIKPEEILVIHDELDLPPGVAKIKQGGGHGGHNGLKDTIAQLANNKNFYRLRIGIGHPGDKNLVSAYVLSKPSPIDRSAIDKALDEAASCMEILLKDGITKATNRLNGFKA</sequence>
<protein>
    <recommendedName>
        <fullName evidence="1">Peptidyl-tRNA hydrolase</fullName>
        <shortName evidence="1">Pth</shortName>
        <ecNumber evidence="1">3.1.1.29</ecNumber>
    </recommendedName>
</protein>
<proteinExistence type="inferred from homology"/>
<name>PTH_MANSM</name>
<gene>
    <name evidence="1" type="primary">pth</name>
    <name type="ordered locus">MS0556</name>
</gene>
<evidence type="ECO:0000255" key="1">
    <source>
        <dbReference type="HAMAP-Rule" id="MF_00083"/>
    </source>
</evidence>
<dbReference type="EC" id="3.1.1.29" evidence="1"/>
<dbReference type="EMBL" id="AE016827">
    <property type="protein sequence ID" value="AAU37163.1"/>
    <property type="molecule type" value="Genomic_DNA"/>
</dbReference>
<dbReference type="RefSeq" id="WP_011199735.1">
    <property type="nucleotide sequence ID" value="NC_006300.1"/>
</dbReference>
<dbReference type="SMR" id="Q65V47"/>
<dbReference type="STRING" id="221988.MS0556"/>
<dbReference type="KEGG" id="msu:MS0556"/>
<dbReference type="eggNOG" id="COG0193">
    <property type="taxonomic scope" value="Bacteria"/>
</dbReference>
<dbReference type="HOGENOM" id="CLU_062456_3_1_6"/>
<dbReference type="OrthoDB" id="9800507at2"/>
<dbReference type="Proteomes" id="UP000000607">
    <property type="component" value="Chromosome"/>
</dbReference>
<dbReference type="GO" id="GO:0005737">
    <property type="term" value="C:cytoplasm"/>
    <property type="evidence" value="ECO:0007669"/>
    <property type="project" value="UniProtKB-SubCell"/>
</dbReference>
<dbReference type="GO" id="GO:0004045">
    <property type="term" value="F:peptidyl-tRNA hydrolase activity"/>
    <property type="evidence" value="ECO:0007669"/>
    <property type="project" value="UniProtKB-UniRule"/>
</dbReference>
<dbReference type="GO" id="GO:0000049">
    <property type="term" value="F:tRNA binding"/>
    <property type="evidence" value="ECO:0007669"/>
    <property type="project" value="UniProtKB-UniRule"/>
</dbReference>
<dbReference type="GO" id="GO:0006515">
    <property type="term" value="P:protein quality control for misfolded or incompletely synthesized proteins"/>
    <property type="evidence" value="ECO:0007669"/>
    <property type="project" value="UniProtKB-UniRule"/>
</dbReference>
<dbReference type="GO" id="GO:0072344">
    <property type="term" value="P:rescue of stalled ribosome"/>
    <property type="evidence" value="ECO:0007669"/>
    <property type="project" value="UniProtKB-UniRule"/>
</dbReference>
<dbReference type="CDD" id="cd00462">
    <property type="entry name" value="PTH"/>
    <property type="match status" value="1"/>
</dbReference>
<dbReference type="FunFam" id="3.40.50.1470:FF:000001">
    <property type="entry name" value="Peptidyl-tRNA hydrolase"/>
    <property type="match status" value="1"/>
</dbReference>
<dbReference type="Gene3D" id="3.40.50.1470">
    <property type="entry name" value="Peptidyl-tRNA hydrolase"/>
    <property type="match status" value="1"/>
</dbReference>
<dbReference type="HAMAP" id="MF_00083">
    <property type="entry name" value="Pept_tRNA_hydro_bact"/>
    <property type="match status" value="1"/>
</dbReference>
<dbReference type="InterPro" id="IPR001328">
    <property type="entry name" value="Pept_tRNA_hydro"/>
</dbReference>
<dbReference type="InterPro" id="IPR018171">
    <property type="entry name" value="Pept_tRNA_hydro_CS"/>
</dbReference>
<dbReference type="InterPro" id="IPR036416">
    <property type="entry name" value="Pept_tRNA_hydro_sf"/>
</dbReference>
<dbReference type="NCBIfam" id="TIGR00447">
    <property type="entry name" value="pth"/>
    <property type="match status" value="1"/>
</dbReference>
<dbReference type="PANTHER" id="PTHR17224">
    <property type="entry name" value="PEPTIDYL-TRNA HYDROLASE"/>
    <property type="match status" value="1"/>
</dbReference>
<dbReference type="PANTHER" id="PTHR17224:SF1">
    <property type="entry name" value="PEPTIDYL-TRNA HYDROLASE"/>
    <property type="match status" value="1"/>
</dbReference>
<dbReference type="Pfam" id="PF01195">
    <property type="entry name" value="Pept_tRNA_hydro"/>
    <property type="match status" value="1"/>
</dbReference>
<dbReference type="SUPFAM" id="SSF53178">
    <property type="entry name" value="Peptidyl-tRNA hydrolase-like"/>
    <property type="match status" value="1"/>
</dbReference>
<dbReference type="PROSITE" id="PS01195">
    <property type="entry name" value="PEPT_TRNA_HYDROL_1"/>
    <property type="match status" value="1"/>
</dbReference>
<dbReference type="PROSITE" id="PS01196">
    <property type="entry name" value="PEPT_TRNA_HYDROL_2"/>
    <property type="match status" value="1"/>
</dbReference>
<reference key="1">
    <citation type="journal article" date="2004" name="Nat. Biotechnol.">
        <title>The genome sequence of the capnophilic rumen bacterium Mannheimia succiniciproducens.</title>
        <authorList>
            <person name="Hong S.H."/>
            <person name="Kim J.S."/>
            <person name="Lee S.Y."/>
            <person name="In Y.H."/>
            <person name="Choi S.S."/>
            <person name="Rih J.-K."/>
            <person name="Kim C.H."/>
            <person name="Jeong H."/>
            <person name="Hur C.G."/>
            <person name="Kim J.J."/>
        </authorList>
    </citation>
    <scope>NUCLEOTIDE SEQUENCE [LARGE SCALE GENOMIC DNA]</scope>
    <source>
        <strain>KCTC 0769BP / MBEL55E</strain>
    </source>
</reference>